<reference key="1">
    <citation type="journal article" date="2002" name="Proc. Natl. Acad. Sci. U.S.A.">
        <title>Genome sequence of the hyperthermophilic crenarchaeon Pyrobaculum aerophilum.</title>
        <authorList>
            <person name="Fitz-Gibbon S.T."/>
            <person name="Ladner H."/>
            <person name="Kim U.-J."/>
            <person name="Stetter K.O."/>
            <person name="Simon M.I."/>
            <person name="Miller J.H."/>
        </authorList>
    </citation>
    <scope>NUCLEOTIDE SEQUENCE [LARGE SCALE GENOMIC DNA]</scope>
    <source>
        <strain>ATCC 51768 / DSM 7523 / JCM 9630 / CIP 104966 / NBRC 100827 / IM2</strain>
    </source>
</reference>
<name>ILVD_PYRAE</name>
<keyword id="KW-0001">2Fe-2S</keyword>
<keyword id="KW-0028">Amino-acid biosynthesis</keyword>
<keyword id="KW-0100">Branched-chain amino acid biosynthesis</keyword>
<keyword id="KW-0408">Iron</keyword>
<keyword id="KW-0411">Iron-sulfur</keyword>
<keyword id="KW-0456">Lyase</keyword>
<keyword id="KW-0460">Magnesium</keyword>
<keyword id="KW-0479">Metal-binding</keyword>
<keyword id="KW-1185">Reference proteome</keyword>
<dbReference type="EC" id="4.2.1.9" evidence="1"/>
<dbReference type="EMBL" id="AE009441">
    <property type="protein sequence ID" value="AAL62897.1"/>
    <property type="molecule type" value="Genomic_DNA"/>
</dbReference>
<dbReference type="RefSeq" id="WP_011007369.1">
    <property type="nucleotide sequence ID" value="NC_003364.1"/>
</dbReference>
<dbReference type="SMR" id="Q8ZYU6"/>
<dbReference type="FunCoup" id="Q8ZYU6">
    <property type="interactions" value="200"/>
</dbReference>
<dbReference type="STRING" id="178306.PAE0615"/>
<dbReference type="EnsemblBacteria" id="AAL62897">
    <property type="protein sequence ID" value="AAL62897"/>
    <property type="gene ID" value="PAE0615"/>
</dbReference>
<dbReference type="GeneID" id="1465122"/>
<dbReference type="KEGG" id="pai:PAE0615"/>
<dbReference type="PATRIC" id="fig|178306.9.peg.441"/>
<dbReference type="eggNOG" id="arCOG04045">
    <property type="taxonomic scope" value="Archaea"/>
</dbReference>
<dbReference type="HOGENOM" id="CLU_014271_4_2_2"/>
<dbReference type="InParanoid" id="Q8ZYU6"/>
<dbReference type="UniPathway" id="UPA00047">
    <property type="reaction ID" value="UER00057"/>
</dbReference>
<dbReference type="UniPathway" id="UPA00049">
    <property type="reaction ID" value="UER00061"/>
</dbReference>
<dbReference type="Proteomes" id="UP000002439">
    <property type="component" value="Chromosome"/>
</dbReference>
<dbReference type="GO" id="GO:0051537">
    <property type="term" value="F:2 iron, 2 sulfur cluster binding"/>
    <property type="evidence" value="ECO:0007669"/>
    <property type="project" value="UniProtKB-UniRule"/>
</dbReference>
<dbReference type="GO" id="GO:0004160">
    <property type="term" value="F:dihydroxy-acid dehydratase activity"/>
    <property type="evidence" value="ECO:0000318"/>
    <property type="project" value="GO_Central"/>
</dbReference>
<dbReference type="GO" id="GO:0000287">
    <property type="term" value="F:magnesium ion binding"/>
    <property type="evidence" value="ECO:0007669"/>
    <property type="project" value="UniProtKB-UniRule"/>
</dbReference>
<dbReference type="GO" id="GO:0009082">
    <property type="term" value="P:branched-chain amino acid biosynthetic process"/>
    <property type="evidence" value="ECO:0000318"/>
    <property type="project" value="GO_Central"/>
</dbReference>
<dbReference type="GO" id="GO:0009097">
    <property type="term" value="P:isoleucine biosynthetic process"/>
    <property type="evidence" value="ECO:0007669"/>
    <property type="project" value="UniProtKB-UniRule"/>
</dbReference>
<dbReference type="GO" id="GO:0009099">
    <property type="term" value="P:L-valine biosynthetic process"/>
    <property type="evidence" value="ECO:0007669"/>
    <property type="project" value="UniProtKB-UniRule"/>
</dbReference>
<dbReference type="FunFam" id="3.50.30.80:FF:000001">
    <property type="entry name" value="Dihydroxy-acid dehydratase"/>
    <property type="match status" value="1"/>
</dbReference>
<dbReference type="Gene3D" id="3.50.30.80">
    <property type="entry name" value="IlvD/EDD C-terminal domain-like"/>
    <property type="match status" value="1"/>
</dbReference>
<dbReference type="HAMAP" id="MF_00012">
    <property type="entry name" value="IlvD"/>
    <property type="match status" value="1"/>
</dbReference>
<dbReference type="InterPro" id="IPR050165">
    <property type="entry name" value="DHAD_IlvD/Edd"/>
</dbReference>
<dbReference type="InterPro" id="IPR042096">
    <property type="entry name" value="Dihydro-acid_dehy_C"/>
</dbReference>
<dbReference type="InterPro" id="IPR004404">
    <property type="entry name" value="DihydroxyA_deHydtase"/>
</dbReference>
<dbReference type="InterPro" id="IPR020558">
    <property type="entry name" value="DiOHA_6PGluconate_deHydtase_CS"/>
</dbReference>
<dbReference type="InterPro" id="IPR056740">
    <property type="entry name" value="ILV_EDD_C"/>
</dbReference>
<dbReference type="InterPro" id="IPR000581">
    <property type="entry name" value="ILV_EDD_N"/>
</dbReference>
<dbReference type="InterPro" id="IPR037237">
    <property type="entry name" value="IlvD/EDD_N"/>
</dbReference>
<dbReference type="NCBIfam" id="TIGR00110">
    <property type="entry name" value="ilvD"/>
    <property type="match status" value="1"/>
</dbReference>
<dbReference type="NCBIfam" id="NF002068">
    <property type="entry name" value="PRK00911.1"/>
    <property type="match status" value="1"/>
</dbReference>
<dbReference type="PANTHER" id="PTHR21000">
    <property type="entry name" value="DIHYDROXY-ACID DEHYDRATASE DAD"/>
    <property type="match status" value="1"/>
</dbReference>
<dbReference type="PANTHER" id="PTHR21000:SF5">
    <property type="entry name" value="DIHYDROXY-ACID DEHYDRATASE, MITOCHONDRIAL"/>
    <property type="match status" value="1"/>
</dbReference>
<dbReference type="Pfam" id="PF24877">
    <property type="entry name" value="ILV_EDD_C"/>
    <property type="match status" value="1"/>
</dbReference>
<dbReference type="Pfam" id="PF00920">
    <property type="entry name" value="ILVD_EDD_N"/>
    <property type="match status" value="1"/>
</dbReference>
<dbReference type="SUPFAM" id="SSF143975">
    <property type="entry name" value="IlvD/EDD N-terminal domain-like"/>
    <property type="match status" value="1"/>
</dbReference>
<dbReference type="SUPFAM" id="SSF52016">
    <property type="entry name" value="LeuD/IlvD-like"/>
    <property type="match status" value="1"/>
</dbReference>
<dbReference type="PROSITE" id="PS00886">
    <property type="entry name" value="ILVD_EDD_1"/>
    <property type="match status" value="1"/>
</dbReference>
<dbReference type="PROSITE" id="PS00887">
    <property type="entry name" value="ILVD_EDD_2"/>
    <property type="match status" value="1"/>
</dbReference>
<gene>
    <name evidence="1" type="primary">ilvD</name>
    <name type="ordered locus">PAE0615</name>
</gene>
<proteinExistence type="inferred from homology"/>
<organism>
    <name type="scientific">Pyrobaculum aerophilum (strain ATCC 51768 / DSM 7523 / JCM 9630 / CIP 104966 / NBRC 100827 / IM2)</name>
    <dbReference type="NCBI Taxonomy" id="178306"/>
    <lineage>
        <taxon>Archaea</taxon>
        <taxon>Thermoproteota</taxon>
        <taxon>Thermoprotei</taxon>
        <taxon>Thermoproteales</taxon>
        <taxon>Thermoproteaceae</taxon>
        <taxon>Pyrobaculum</taxon>
    </lineage>
</organism>
<accession>Q8ZYU6</accession>
<feature type="chain" id="PRO_0000103548" description="Dihydroxy-acid dehydratase">
    <location>
        <begin position="1"/>
        <end position="562"/>
    </location>
</feature>
<feature type="active site" description="Proton acceptor" evidence="1">
    <location>
        <position position="474"/>
    </location>
</feature>
<feature type="binding site" evidence="1">
    <location>
        <position position="51"/>
    </location>
    <ligand>
        <name>[2Fe-2S] cluster</name>
        <dbReference type="ChEBI" id="CHEBI:190135"/>
    </ligand>
</feature>
<feature type="binding site" evidence="1">
    <location>
        <position position="83"/>
    </location>
    <ligand>
        <name>Mg(2+)</name>
        <dbReference type="ChEBI" id="CHEBI:18420"/>
    </ligand>
</feature>
<feature type="binding site" evidence="1">
    <location>
        <position position="124"/>
    </location>
    <ligand>
        <name>[2Fe-2S] cluster</name>
        <dbReference type="ChEBI" id="CHEBI:190135"/>
    </ligand>
</feature>
<feature type="binding site" evidence="1">
    <location>
        <position position="125"/>
    </location>
    <ligand>
        <name>Mg(2+)</name>
        <dbReference type="ChEBI" id="CHEBI:18420"/>
    </ligand>
</feature>
<feature type="binding site" description="via carbamate group" evidence="1">
    <location>
        <position position="126"/>
    </location>
    <ligand>
        <name>Mg(2+)</name>
        <dbReference type="ChEBI" id="CHEBI:18420"/>
    </ligand>
</feature>
<feature type="binding site" evidence="1">
    <location>
        <position position="196"/>
    </location>
    <ligand>
        <name>[2Fe-2S] cluster</name>
        <dbReference type="ChEBI" id="CHEBI:190135"/>
    </ligand>
</feature>
<feature type="binding site" evidence="1">
    <location>
        <position position="448"/>
    </location>
    <ligand>
        <name>Mg(2+)</name>
        <dbReference type="ChEBI" id="CHEBI:18420"/>
    </ligand>
</feature>
<feature type="modified residue" description="N6-carboxylysine" evidence="1">
    <location>
        <position position="126"/>
    </location>
</feature>
<comment type="function">
    <text evidence="1">Functions in the biosynthesis of branched-chain amino acids. Catalyzes the dehydration of (2R,3R)-2,3-dihydroxy-3-methylpentanoate (2,3-dihydroxy-3-methylvalerate) into 2-oxo-3-methylpentanoate (2-oxo-3-methylvalerate) and of (2R)-2,3-dihydroxy-3-methylbutanoate (2,3-dihydroxyisovalerate) into 2-oxo-3-methylbutanoate (2-oxoisovalerate), the penultimate precursor to L-isoleucine and L-valine, respectively.</text>
</comment>
<comment type="catalytic activity">
    <reaction evidence="1">
        <text>(2R)-2,3-dihydroxy-3-methylbutanoate = 3-methyl-2-oxobutanoate + H2O</text>
        <dbReference type="Rhea" id="RHEA:24809"/>
        <dbReference type="ChEBI" id="CHEBI:11851"/>
        <dbReference type="ChEBI" id="CHEBI:15377"/>
        <dbReference type="ChEBI" id="CHEBI:49072"/>
        <dbReference type="EC" id="4.2.1.9"/>
    </reaction>
    <physiologicalReaction direction="left-to-right" evidence="1">
        <dbReference type="Rhea" id="RHEA:24810"/>
    </physiologicalReaction>
</comment>
<comment type="catalytic activity">
    <reaction evidence="1">
        <text>(2R,3R)-2,3-dihydroxy-3-methylpentanoate = (S)-3-methyl-2-oxopentanoate + H2O</text>
        <dbReference type="Rhea" id="RHEA:27694"/>
        <dbReference type="ChEBI" id="CHEBI:15377"/>
        <dbReference type="ChEBI" id="CHEBI:35146"/>
        <dbReference type="ChEBI" id="CHEBI:49258"/>
        <dbReference type="EC" id="4.2.1.9"/>
    </reaction>
    <physiologicalReaction direction="left-to-right" evidence="1">
        <dbReference type="Rhea" id="RHEA:27695"/>
    </physiologicalReaction>
</comment>
<comment type="cofactor">
    <cofactor evidence="1">
        <name>[2Fe-2S] cluster</name>
        <dbReference type="ChEBI" id="CHEBI:190135"/>
    </cofactor>
    <text evidence="1">Binds 1 [2Fe-2S] cluster per subunit. This cluster acts as a Lewis acid cofactor.</text>
</comment>
<comment type="cofactor">
    <cofactor evidence="1">
        <name>Mg(2+)</name>
        <dbReference type="ChEBI" id="CHEBI:18420"/>
    </cofactor>
</comment>
<comment type="pathway">
    <text evidence="1">Amino-acid biosynthesis; L-isoleucine biosynthesis; L-isoleucine from 2-oxobutanoate: step 3/4.</text>
</comment>
<comment type="pathway">
    <text evidence="1">Amino-acid biosynthesis; L-valine biosynthesis; L-valine from pyruvate: step 3/4.</text>
</comment>
<comment type="subunit">
    <text evidence="1">Homodimer.</text>
</comment>
<comment type="similarity">
    <text evidence="1">Belongs to the IlvD/Edd family.</text>
</comment>
<sequence length="562" mass="59751">MVKIRIRSPLWYDGVDNAPHRSYLKAIGFTEEDFSKPIVGVLASWSELGPCNYHTLELAKYVKEGIKEAGGVGLAAPTIVVNDGINMGTPGMRYSLISRDLIADTIEAQFNAHGVDAWVGIGGCDKTQPGIMMAMVRLDIPAVYLYGGTAEAGWLGERELTIEDTFEAVGAYLAGRITLEDLKRIEELSFPSYGTCQGLFTANTMAMIGEALGLSLLGSASPPATSSRRRAFAIASGRAVLKAAELGITPRKVVTYDALYNAAVTLFATAGSTNAILHLLAIAHEAGVKFTLDDFDEISKKVPVIAALRPAGPYAMQDLDKIGGVPRILKKLYKAGLLRGEALTVEGETIGKLLDRWQPPPLPEAGVLYDVDRPYKPYSGIRILRGNLAPNGAVMKVGAAERLKFEGRAKVYDSEAEAFKAVASGEIKAGDVVVIRYEGPKGAPGMPEMLKITAAIVGAGLGEVVALITDGRFSGATRGIMVGHVSPEAAVGGPIALVQNGDRIVIDGEAGLLKLELGEEELERRRKNWSPPPPKYKGGLLAKYASLVQQADKGAVTSPPVL</sequence>
<evidence type="ECO:0000255" key="1">
    <source>
        <dbReference type="HAMAP-Rule" id="MF_00012"/>
    </source>
</evidence>
<protein>
    <recommendedName>
        <fullName evidence="1">Dihydroxy-acid dehydratase</fullName>
        <shortName evidence="1">DAD</shortName>
        <ecNumber evidence="1">4.2.1.9</ecNumber>
    </recommendedName>
</protein>